<gene>
    <name type="primary">CYCB2-3</name>
    <name type="ordered locus">At1g20610</name>
    <name type="ORF">F2D10.10</name>
    <name type="ORF">F5M15.6</name>
</gene>
<protein>
    <recommendedName>
        <fullName>Cyclin-B2-3</fullName>
    </recommendedName>
    <alternativeName>
        <fullName>G2/mitotic-specific cyclin-B2-3</fullName>
        <shortName>CycB2;3</shortName>
    </alternativeName>
</protein>
<feature type="chain" id="PRO_0000287014" description="Cyclin-B2-3">
    <location>
        <begin position="1"/>
        <end position="429"/>
    </location>
</feature>
<feature type="region of interest" description="Disordered" evidence="1">
    <location>
        <begin position="86"/>
        <end position="109"/>
    </location>
</feature>
<feature type="compositionally biased region" description="Basic and acidic residues" evidence="1">
    <location>
        <begin position="86"/>
        <end position="101"/>
    </location>
</feature>
<name>CCB23_ARATH</name>
<proteinExistence type="evidence at transcript level"/>
<comment type="developmental stage">
    <text evidence="2">Expressed in the G2/M phases.</text>
</comment>
<comment type="similarity">
    <text evidence="3">Belongs to the cyclin family. Cyclin AB subfamily.</text>
</comment>
<comment type="sequence caution" evidence="3">
    <conflict type="erroneous gene model prediction">
        <sequence resource="EMBL-CDS" id="AAF79603"/>
    </conflict>
</comment>
<comment type="sequence caution" evidence="3">
    <conflict type="erroneous gene model prediction">
        <sequence resource="EMBL-CDS" id="AAF80638"/>
    </conflict>
</comment>
<organism>
    <name type="scientific">Arabidopsis thaliana</name>
    <name type="common">Mouse-ear cress</name>
    <dbReference type="NCBI Taxonomy" id="3702"/>
    <lineage>
        <taxon>Eukaryota</taxon>
        <taxon>Viridiplantae</taxon>
        <taxon>Streptophyta</taxon>
        <taxon>Embryophyta</taxon>
        <taxon>Tracheophyta</taxon>
        <taxon>Spermatophyta</taxon>
        <taxon>Magnoliopsida</taxon>
        <taxon>eudicotyledons</taxon>
        <taxon>Gunneridae</taxon>
        <taxon>Pentapetalae</taxon>
        <taxon>rosids</taxon>
        <taxon>malvids</taxon>
        <taxon>Brassicales</taxon>
        <taxon>Brassicaceae</taxon>
        <taxon>Camelineae</taxon>
        <taxon>Arabidopsis</taxon>
    </lineage>
</organism>
<evidence type="ECO:0000256" key="1">
    <source>
        <dbReference type="SAM" id="MobiDB-lite"/>
    </source>
</evidence>
<evidence type="ECO:0000269" key="2">
    <source>
    </source>
</evidence>
<evidence type="ECO:0000305" key="3"/>
<reference key="1">
    <citation type="journal article" date="2000" name="Nature">
        <title>Sequence and analysis of chromosome 1 of the plant Arabidopsis thaliana.</title>
        <authorList>
            <person name="Theologis A."/>
            <person name="Ecker J.R."/>
            <person name="Palm C.J."/>
            <person name="Federspiel N.A."/>
            <person name="Kaul S."/>
            <person name="White O."/>
            <person name="Alonso J."/>
            <person name="Altafi H."/>
            <person name="Araujo R."/>
            <person name="Bowman C.L."/>
            <person name="Brooks S.Y."/>
            <person name="Buehler E."/>
            <person name="Chan A."/>
            <person name="Chao Q."/>
            <person name="Chen H."/>
            <person name="Cheuk R.F."/>
            <person name="Chin C.W."/>
            <person name="Chung M.K."/>
            <person name="Conn L."/>
            <person name="Conway A.B."/>
            <person name="Conway A.R."/>
            <person name="Creasy T.H."/>
            <person name="Dewar K."/>
            <person name="Dunn P."/>
            <person name="Etgu P."/>
            <person name="Feldblyum T.V."/>
            <person name="Feng J.-D."/>
            <person name="Fong B."/>
            <person name="Fujii C.Y."/>
            <person name="Gill J.E."/>
            <person name="Goldsmith A.D."/>
            <person name="Haas B."/>
            <person name="Hansen N.F."/>
            <person name="Hughes B."/>
            <person name="Huizar L."/>
            <person name="Hunter J.L."/>
            <person name="Jenkins J."/>
            <person name="Johnson-Hopson C."/>
            <person name="Khan S."/>
            <person name="Khaykin E."/>
            <person name="Kim C.J."/>
            <person name="Koo H.L."/>
            <person name="Kremenetskaia I."/>
            <person name="Kurtz D.B."/>
            <person name="Kwan A."/>
            <person name="Lam B."/>
            <person name="Langin-Hooper S."/>
            <person name="Lee A."/>
            <person name="Lee J.M."/>
            <person name="Lenz C.A."/>
            <person name="Li J.H."/>
            <person name="Li Y.-P."/>
            <person name="Lin X."/>
            <person name="Liu S.X."/>
            <person name="Liu Z.A."/>
            <person name="Luros J.S."/>
            <person name="Maiti R."/>
            <person name="Marziali A."/>
            <person name="Militscher J."/>
            <person name="Miranda M."/>
            <person name="Nguyen M."/>
            <person name="Nierman W.C."/>
            <person name="Osborne B.I."/>
            <person name="Pai G."/>
            <person name="Peterson J."/>
            <person name="Pham P.K."/>
            <person name="Rizzo M."/>
            <person name="Rooney T."/>
            <person name="Rowley D."/>
            <person name="Sakano H."/>
            <person name="Salzberg S.L."/>
            <person name="Schwartz J.R."/>
            <person name="Shinn P."/>
            <person name="Southwick A.M."/>
            <person name="Sun H."/>
            <person name="Tallon L.J."/>
            <person name="Tambunga G."/>
            <person name="Toriumi M.J."/>
            <person name="Town C.D."/>
            <person name="Utterback T."/>
            <person name="Van Aken S."/>
            <person name="Vaysberg M."/>
            <person name="Vysotskaia V.S."/>
            <person name="Walker M."/>
            <person name="Wu D."/>
            <person name="Yu G."/>
            <person name="Fraser C.M."/>
            <person name="Venter J.C."/>
            <person name="Davis R.W."/>
        </authorList>
    </citation>
    <scope>NUCLEOTIDE SEQUENCE [LARGE SCALE GENOMIC DNA]</scope>
    <source>
        <strain>cv. Columbia</strain>
    </source>
</reference>
<reference key="2">
    <citation type="journal article" date="2017" name="Plant J.">
        <title>Araport11: a complete reannotation of the Arabidopsis thaliana reference genome.</title>
        <authorList>
            <person name="Cheng C.Y."/>
            <person name="Krishnakumar V."/>
            <person name="Chan A.P."/>
            <person name="Thibaud-Nissen F."/>
            <person name="Schobel S."/>
            <person name="Town C.D."/>
        </authorList>
    </citation>
    <scope>GENOME REANNOTATION</scope>
    <source>
        <strain>cv. Columbia</strain>
    </source>
</reference>
<reference key="3">
    <citation type="submission" date="2006-12" db="EMBL/GenBank/DDBJ databases">
        <title>Arabidopsis ORF clones.</title>
        <authorList>
            <person name="Bautista V.R."/>
            <person name="Kim C.J."/>
            <person name="Chen H."/>
            <person name="Wu S.Y."/>
            <person name="De Los Reyes C."/>
            <person name="Ecker J.R."/>
        </authorList>
    </citation>
    <scope>NUCLEOTIDE SEQUENCE [LARGE SCALE MRNA]</scope>
    <source>
        <strain>cv. Columbia</strain>
    </source>
</reference>
<reference key="4">
    <citation type="journal article" date="2004" name="Plant Physiol.">
        <title>Genome-wide analysis of the cyclin family in Arabidopsis and comparative phylogenetic analysis of plant cyclin-like proteins.</title>
        <authorList>
            <person name="Wang G."/>
            <person name="Kong H."/>
            <person name="Sun Y."/>
            <person name="Zhang X."/>
            <person name="Zhang W."/>
            <person name="Altman N."/>
            <person name="dePamphilis C.W."/>
            <person name="Ma H."/>
        </authorList>
    </citation>
    <scope>GENE FAMILY</scope>
    <scope>NOMENCLATURE</scope>
</reference>
<reference key="5">
    <citation type="journal article" date="2006" name="Plant Cell">
        <title>The D-type cyclin CYCD3;1 is limiting for the G1-to-S-phase transition in Arabidopsis.</title>
        <authorList>
            <person name="Menges M."/>
            <person name="Samland A.K."/>
            <person name="Planchais S."/>
            <person name="Murray J.A.H."/>
        </authorList>
    </citation>
    <scope>DEVELOPMENTAL STAGE</scope>
</reference>
<dbReference type="EMBL" id="AC027665">
    <property type="protein sequence ID" value="AAF79603.1"/>
    <property type="status" value="ALT_SEQ"/>
    <property type="molecule type" value="Genomic_DNA"/>
</dbReference>
<dbReference type="EMBL" id="AC069251">
    <property type="protein sequence ID" value="AAF80638.1"/>
    <property type="status" value="ALT_SEQ"/>
    <property type="molecule type" value="Genomic_DNA"/>
</dbReference>
<dbReference type="EMBL" id="CP002684">
    <property type="protein sequence ID" value="AEE29993.1"/>
    <property type="molecule type" value="Genomic_DNA"/>
</dbReference>
<dbReference type="EMBL" id="BT029740">
    <property type="protein sequence ID" value="ABM06010.1"/>
    <property type="molecule type" value="mRNA"/>
</dbReference>
<dbReference type="PIR" id="B86339">
    <property type="entry name" value="B86339"/>
</dbReference>
<dbReference type="RefSeq" id="NP_173485.1">
    <property type="nucleotide sequence ID" value="NM_101912.3"/>
</dbReference>
<dbReference type="SMR" id="Q9LDM4"/>
<dbReference type="BioGRID" id="23889">
    <property type="interactions" value="21"/>
</dbReference>
<dbReference type="FunCoup" id="Q9LDM4">
    <property type="interactions" value="1507"/>
</dbReference>
<dbReference type="IntAct" id="Q9LDM4">
    <property type="interactions" value="12"/>
</dbReference>
<dbReference type="STRING" id="3702.Q9LDM4"/>
<dbReference type="PaxDb" id="3702-AT1G20610.1"/>
<dbReference type="EnsemblPlants" id="AT1G20610.1">
    <property type="protein sequence ID" value="AT1G20610.1"/>
    <property type="gene ID" value="AT1G20610"/>
</dbReference>
<dbReference type="GeneID" id="838650"/>
<dbReference type="Gramene" id="AT1G20610.1">
    <property type="protein sequence ID" value="AT1G20610.1"/>
    <property type="gene ID" value="AT1G20610"/>
</dbReference>
<dbReference type="KEGG" id="ath:AT1G20610"/>
<dbReference type="Araport" id="AT1G20610"/>
<dbReference type="TAIR" id="AT1G20610">
    <property type="gene designation" value="CYCB2"/>
</dbReference>
<dbReference type="eggNOG" id="KOG0653">
    <property type="taxonomic scope" value="Eukaryota"/>
</dbReference>
<dbReference type="HOGENOM" id="CLU_020695_0_0_1"/>
<dbReference type="InParanoid" id="Q9LDM4"/>
<dbReference type="OMA" id="FFMVELC"/>
<dbReference type="PhylomeDB" id="Q9LDM4"/>
<dbReference type="PRO" id="PR:Q9LDM4"/>
<dbReference type="Proteomes" id="UP000006548">
    <property type="component" value="Chromosome 1"/>
</dbReference>
<dbReference type="ExpressionAtlas" id="Q9LDM4">
    <property type="expression patterns" value="baseline and differential"/>
</dbReference>
<dbReference type="GO" id="GO:0016538">
    <property type="term" value="F:cyclin-dependent protein serine/threonine kinase regulator activity"/>
    <property type="evidence" value="ECO:0007669"/>
    <property type="project" value="InterPro"/>
</dbReference>
<dbReference type="GO" id="GO:0051301">
    <property type="term" value="P:cell division"/>
    <property type="evidence" value="ECO:0007669"/>
    <property type="project" value="UniProtKB-KW"/>
</dbReference>
<dbReference type="GO" id="GO:0044772">
    <property type="term" value="P:mitotic cell cycle phase transition"/>
    <property type="evidence" value="ECO:0007669"/>
    <property type="project" value="InterPro"/>
</dbReference>
<dbReference type="CDD" id="cd20567">
    <property type="entry name" value="CYCLIN_AtCycB-like_rpt1"/>
    <property type="match status" value="1"/>
</dbReference>
<dbReference type="CDD" id="cd20511">
    <property type="entry name" value="CYCLIN_AtCycB-like_rpt2"/>
    <property type="match status" value="1"/>
</dbReference>
<dbReference type="FunFam" id="1.10.472.10:FF:000032">
    <property type="entry name" value="G2/mitotic-specific cyclin-1"/>
    <property type="match status" value="1"/>
</dbReference>
<dbReference type="Gene3D" id="1.10.472.10">
    <property type="entry name" value="Cyclin-like"/>
    <property type="match status" value="2"/>
</dbReference>
<dbReference type="InterPro" id="IPR039361">
    <property type="entry name" value="Cyclin"/>
</dbReference>
<dbReference type="InterPro" id="IPR013763">
    <property type="entry name" value="Cyclin-like_dom"/>
</dbReference>
<dbReference type="InterPro" id="IPR036915">
    <property type="entry name" value="Cyclin-like_sf"/>
</dbReference>
<dbReference type="InterPro" id="IPR046965">
    <property type="entry name" value="Cyclin_A/B-like"/>
</dbReference>
<dbReference type="InterPro" id="IPR004367">
    <property type="entry name" value="Cyclin_C-dom"/>
</dbReference>
<dbReference type="InterPro" id="IPR006671">
    <property type="entry name" value="Cyclin_N"/>
</dbReference>
<dbReference type="InterPro" id="IPR048258">
    <property type="entry name" value="Cyclins_cyclin-box"/>
</dbReference>
<dbReference type="PANTHER" id="PTHR10177">
    <property type="entry name" value="CYCLINS"/>
    <property type="match status" value="1"/>
</dbReference>
<dbReference type="Pfam" id="PF02984">
    <property type="entry name" value="Cyclin_C"/>
    <property type="match status" value="1"/>
</dbReference>
<dbReference type="Pfam" id="PF00134">
    <property type="entry name" value="Cyclin_N"/>
    <property type="match status" value="1"/>
</dbReference>
<dbReference type="PIRSF" id="PIRSF001771">
    <property type="entry name" value="Cyclin_A_B_D_E"/>
    <property type="match status" value="1"/>
</dbReference>
<dbReference type="SMART" id="SM00385">
    <property type="entry name" value="CYCLIN"/>
    <property type="match status" value="2"/>
</dbReference>
<dbReference type="SMART" id="SM01332">
    <property type="entry name" value="Cyclin_C"/>
    <property type="match status" value="1"/>
</dbReference>
<dbReference type="SUPFAM" id="SSF47954">
    <property type="entry name" value="Cyclin-like"/>
    <property type="match status" value="2"/>
</dbReference>
<dbReference type="PROSITE" id="PS00292">
    <property type="entry name" value="CYCLINS"/>
    <property type="match status" value="1"/>
</dbReference>
<accession>Q9LDM4</accession>
<accession>A1L4V3</accession>
<sequence length="429" mass="48864">MVRSDENSLGLIGSMSLQGGGVVGKIKTTATTGPTRRALSTINKNITEAPSYPYAVNKRSVSERDGICNKPPVHRPVTRKFAAQLADHKPHIRDEETKKPDSVSSEEPETIIIDVDESDKEGGDSNEPMFVQHTEAMLEEIEQMEKEIEMEDADKEEEPVIDIDACDKNNPLAAVEYIHDMHTFYKNFEKLSCVPPNYMDNQQDLNERMRGILIDWLIEVHYKFELMEETLYLTINVIDRFLAVHQIVRKKLQLVGVTALLLACKYEEVSVPVVDDLILISDKAYSRREVLDMEKLMANTLQFNFSLPTPYVFMKRFLKAAQSDKKLEILSFFMIELCLVEYEMLEYLPSKLAASAIYTAQCTLKGFEEWSKTCEFHTGYNEKQLLACARKMVAFHHKAGTGKLTGVHRKYNTSKFCHAARTEPAGFLI</sequence>
<keyword id="KW-0131">Cell cycle</keyword>
<keyword id="KW-0132">Cell division</keyword>
<keyword id="KW-0195">Cyclin</keyword>
<keyword id="KW-1185">Reference proteome</keyword>